<evidence type="ECO:0000250" key="1">
    <source>
        <dbReference type="UniProtKB" id="A2VCW5"/>
    </source>
</evidence>
<evidence type="ECO:0000250" key="2">
    <source>
        <dbReference type="UniProtKB" id="Q8WUX1"/>
    </source>
</evidence>
<evidence type="ECO:0000255" key="3"/>
<evidence type="ECO:0000255" key="4">
    <source>
        <dbReference type="PROSITE-ProRule" id="PRU00114"/>
    </source>
</evidence>
<evidence type="ECO:0000269" key="5">
    <source>
    </source>
</evidence>
<evidence type="ECO:0000269" key="6">
    <source>
    </source>
</evidence>
<evidence type="ECO:0000269" key="7">
    <source>
    </source>
</evidence>
<evidence type="ECO:0000269" key="8">
    <source>
    </source>
</evidence>
<evidence type="ECO:0000303" key="9">
    <source>
    </source>
</evidence>
<evidence type="ECO:0000305" key="10"/>
<evidence type="ECO:0000305" key="11">
    <source>
    </source>
</evidence>
<evidence type="ECO:0000305" key="12">
    <source>
    </source>
</evidence>
<evidence type="ECO:0000312" key="13">
    <source>
        <dbReference type="MGI" id="MGI:2148066"/>
    </source>
</evidence>
<protein>
    <recommendedName>
        <fullName evidence="10">Sodium-coupled neutral amino acid transporter 5</fullName>
    </recommendedName>
    <alternativeName>
        <fullName>Solute carrier family 38 member 5</fullName>
    </alternativeName>
    <alternativeName>
        <fullName>System N transporter 2</fullName>
    </alternativeName>
</protein>
<name>S38A5_MOUSE</name>
<organism>
    <name type="scientific">Mus musculus</name>
    <name type="common">Mouse</name>
    <dbReference type="NCBI Taxonomy" id="10090"/>
    <lineage>
        <taxon>Eukaryota</taxon>
        <taxon>Metazoa</taxon>
        <taxon>Chordata</taxon>
        <taxon>Craniata</taxon>
        <taxon>Vertebrata</taxon>
        <taxon>Euteleostomi</taxon>
        <taxon>Mammalia</taxon>
        <taxon>Eutheria</taxon>
        <taxon>Euarchontoglires</taxon>
        <taxon>Glires</taxon>
        <taxon>Rodentia</taxon>
        <taxon>Myomorpha</taxon>
        <taxon>Muroidea</taxon>
        <taxon>Muridae</taxon>
        <taxon>Murinae</taxon>
        <taxon>Mus</taxon>
        <taxon>Mus</taxon>
    </lineage>
</organism>
<proteinExistence type="evidence at protein level"/>
<feature type="chain" id="PRO_0000312116" description="Sodium-coupled neutral amino acid transporter 5">
    <location>
        <begin position="1"/>
        <end position="479"/>
    </location>
</feature>
<feature type="topological domain" description="Cytoplasmic" evidence="1 3">
    <location>
        <begin position="1"/>
        <end position="61"/>
    </location>
</feature>
<feature type="transmembrane region" description="Helical" evidence="3">
    <location>
        <begin position="62"/>
        <end position="84"/>
    </location>
</feature>
<feature type="topological domain" description="Extracellular" evidence="3">
    <location>
        <begin position="85"/>
        <end position="97"/>
    </location>
</feature>
<feature type="transmembrane region" description="Helical" evidence="3">
    <location>
        <begin position="98"/>
        <end position="118"/>
    </location>
</feature>
<feature type="topological domain" description="Cytoplasmic" evidence="3">
    <location>
        <begin position="119"/>
        <end position="135"/>
    </location>
</feature>
<feature type="transmembrane region" description="Helical" evidence="3">
    <location>
        <begin position="136"/>
        <end position="156"/>
    </location>
</feature>
<feature type="topological domain" description="Extracellular" evidence="3">
    <location>
        <begin position="157"/>
        <end position="176"/>
    </location>
</feature>
<feature type="transmembrane region" description="Helical" evidence="3">
    <location>
        <begin position="177"/>
        <end position="197"/>
    </location>
</feature>
<feature type="topological domain" description="Cytoplasmic" evidence="3">
    <location>
        <begin position="198"/>
        <end position="202"/>
    </location>
</feature>
<feature type="transmembrane region" description="Helical" evidence="3">
    <location>
        <begin position="203"/>
        <end position="223"/>
    </location>
</feature>
<feature type="topological domain" description="Extracellular" evidence="3">
    <location>
        <begin position="224"/>
        <end position="264"/>
    </location>
</feature>
<feature type="transmembrane region" description="Helical" evidence="3">
    <location>
        <begin position="265"/>
        <end position="285"/>
    </location>
</feature>
<feature type="topological domain" description="Cytoplasmic" evidence="3">
    <location>
        <begin position="286"/>
        <end position="302"/>
    </location>
</feature>
<feature type="transmembrane region" description="Helical" evidence="3">
    <location>
        <begin position="303"/>
        <end position="323"/>
    </location>
</feature>
<feature type="topological domain" description="Extracellular" evidence="3">
    <location>
        <begin position="324"/>
        <end position="341"/>
    </location>
</feature>
<feature type="transmembrane region" description="Helical" evidence="3">
    <location>
        <begin position="342"/>
        <end position="362"/>
    </location>
</feature>
<feature type="topological domain" description="Cytoplasmic" evidence="3">
    <location>
        <begin position="363"/>
        <end position="383"/>
    </location>
</feature>
<feature type="transmembrane region" description="Helical" evidence="3">
    <location>
        <begin position="384"/>
        <end position="404"/>
    </location>
</feature>
<feature type="topological domain" description="Extracellular" evidence="3">
    <location>
        <begin position="405"/>
        <end position="406"/>
    </location>
</feature>
<feature type="transmembrane region" description="Helical" evidence="3">
    <location>
        <begin position="407"/>
        <end position="427"/>
    </location>
</feature>
<feature type="topological domain" description="Cytoplasmic" evidence="3">
    <location>
        <begin position="428"/>
        <end position="446"/>
    </location>
</feature>
<feature type="transmembrane region" description="Helical" evidence="3">
    <location>
        <begin position="447"/>
        <end position="467"/>
    </location>
</feature>
<feature type="topological domain" description="Extracellular" evidence="3">
    <location>
        <begin position="468"/>
        <end position="479"/>
    </location>
</feature>
<feature type="site" description="Involved in pH-sensing to the transport activity regulation" evidence="1">
    <location>
        <position position="471"/>
    </location>
</feature>
<feature type="glycosylation site" description="N-linked (GlcNAc...) asparagine" evidence="3">
    <location>
        <position position="236"/>
    </location>
</feature>
<feature type="disulfide bond" evidence="4">
    <location>
        <begin position="231"/>
        <end position="254"/>
    </location>
</feature>
<feature type="splice variant" id="VSP_029703" description="In isoform 2." evidence="9">
    <location>
        <begin position="1"/>
        <end position="8"/>
    </location>
</feature>
<feature type="sequence conflict" description="In Ref. 1; BAC36941." evidence="10" ref="1">
    <original>F</original>
    <variation>L</variation>
    <location>
        <position position="35"/>
    </location>
</feature>
<feature type="sequence conflict" description="In Ref. 1; BAC35799." evidence="10" ref="1">
    <original>S</original>
    <variation>G</variation>
    <location>
        <position position="209"/>
    </location>
</feature>
<keyword id="KW-0025">Alternative splicing</keyword>
<keyword id="KW-1003">Cell membrane</keyword>
<keyword id="KW-1015">Disulfide bond</keyword>
<keyword id="KW-0325">Glycoprotein</keyword>
<keyword id="KW-0472">Membrane</keyword>
<keyword id="KW-1185">Reference proteome</keyword>
<keyword id="KW-0812">Transmembrane</keyword>
<keyword id="KW-1133">Transmembrane helix</keyword>
<reference key="1">
    <citation type="journal article" date="2005" name="Science">
        <title>The transcriptional landscape of the mammalian genome.</title>
        <authorList>
            <person name="Carninci P."/>
            <person name="Kasukawa T."/>
            <person name="Katayama S."/>
            <person name="Gough J."/>
            <person name="Frith M.C."/>
            <person name="Maeda N."/>
            <person name="Oyama R."/>
            <person name="Ravasi T."/>
            <person name="Lenhard B."/>
            <person name="Wells C."/>
            <person name="Kodzius R."/>
            <person name="Shimokawa K."/>
            <person name="Bajic V.B."/>
            <person name="Brenner S.E."/>
            <person name="Batalov S."/>
            <person name="Forrest A.R."/>
            <person name="Zavolan M."/>
            <person name="Davis M.J."/>
            <person name="Wilming L.G."/>
            <person name="Aidinis V."/>
            <person name="Allen J.E."/>
            <person name="Ambesi-Impiombato A."/>
            <person name="Apweiler R."/>
            <person name="Aturaliya R.N."/>
            <person name="Bailey T.L."/>
            <person name="Bansal M."/>
            <person name="Baxter L."/>
            <person name="Beisel K.W."/>
            <person name="Bersano T."/>
            <person name="Bono H."/>
            <person name="Chalk A.M."/>
            <person name="Chiu K.P."/>
            <person name="Choudhary V."/>
            <person name="Christoffels A."/>
            <person name="Clutterbuck D.R."/>
            <person name="Crowe M.L."/>
            <person name="Dalla E."/>
            <person name="Dalrymple B.P."/>
            <person name="de Bono B."/>
            <person name="Della Gatta G."/>
            <person name="di Bernardo D."/>
            <person name="Down T."/>
            <person name="Engstrom P."/>
            <person name="Fagiolini M."/>
            <person name="Faulkner G."/>
            <person name="Fletcher C.F."/>
            <person name="Fukushima T."/>
            <person name="Furuno M."/>
            <person name="Futaki S."/>
            <person name="Gariboldi M."/>
            <person name="Georgii-Hemming P."/>
            <person name="Gingeras T.R."/>
            <person name="Gojobori T."/>
            <person name="Green R.E."/>
            <person name="Gustincich S."/>
            <person name="Harbers M."/>
            <person name="Hayashi Y."/>
            <person name="Hensch T.K."/>
            <person name="Hirokawa N."/>
            <person name="Hill D."/>
            <person name="Huminiecki L."/>
            <person name="Iacono M."/>
            <person name="Ikeo K."/>
            <person name="Iwama A."/>
            <person name="Ishikawa T."/>
            <person name="Jakt M."/>
            <person name="Kanapin A."/>
            <person name="Katoh M."/>
            <person name="Kawasawa Y."/>
            <person name="Kelso J."/>
            <person name="Kitamura H."/>
            <person name="Kitano H."/>
            <person name="Kollias G."/>
            <person name="Krishnan S.P."/>
            <person name="Kruger A."/>
            <person name="Kummerfeld S.K."/>
            <person name="Kurochkin I.V."/>
            <person name="Lareau L.F."/>
            <person name="Lazarevic D."/>
            <person name="Lipovich L."/>
            <person name="Liu J."/>
            <person name="Liuni S."/>
            <person name="McWilliam S."/>
            <person name="Madan Babu M."/>
            <person name="Madera M."/>
            <person name="Marchionni L."/>
            <person name="Matsuda H."/>
            <person name="Matsuzawa S."/>
            <person name="Miki H."/>
            <person name="Mignone F."/>
            <person name="Miyake S."/>
            <person name="Morris K."/>
            <person name="Mottagui-Tabar S."/>
            <person name="Mulder N."/>
            <person name="Nakano N."/>
            <person name="Nakauchi H."/>
            <person name="Ng P."/>
            <person name="Nilsson R."/>
            <person name="Nishiguchi S."/>
            <person name="Nishikawa S."/>
            <person name="Nori F."/>
            <person name="Ohara O."/>
            <person name="Okazaki Y."/>
            <person name="Orlando V."/>
            <person name="Pang K.C."/>
            <person name="Pavan W.J."/>
            <person name="Pavesi G."/>
            <person name="Pesole G."/>
            <person name="Petrovsky N."/>
            <person name="Piazza S."/>
            <person name="Reed J."/>
            <person name="Reid J.F."/>
            <person name="Ring B.Z."/>
            <person name="Ringwald M."/>
            <person name="Rost B."/>
            <person name="Ruan Y."/>
            <person name="Salzberg S.L."/>
            <person name="Sandelin A."/>
            <person name="Schneider C."/>
            <person name="Schoenbach C."/>
            <person name="Sekiguchi K."/>
            <person name="Semple C.A."/>
            <person name="Seno S."/>
            <person name="Sessa L."/>
            <person name="Sheng Y."/>
            <person name="Shibata Y."/>
            <person name="Shimada H."/>
            <person name="Shimada K."/>
            <person name="Silva D."/>
            <person name="Sinclair B."/>
            <person name="Sperling S."/>
            <person name="Stupka E."/>
            <person name="Sugiura K."/>
            <person name="Sultana R."/>
            <person name="Takenaka Y."/>
            <person name="Taki K."/>
            <person name="Tammoja K."/>
            <person name="Tan S.L."/>
            <person name="Tang S."/>
            <person name="Taylor M.S."/>
            <person name="Tegner J."/>
            <person name="Teichmann S.A."/>
            <person name="Ueda H.R."/>
            <person name="van Nimwegen E."/>
            <person name="Verardo R."/>
            <person name="Wei C.L."/>
            <person name="Yagi K."/>
            <person name="Yamanishi H."/>
            <person name="Zabarovsky E."/>
            <person name="Zhu S."/>
            <person name="Zimmer A."/>
            <person name="Hide W."/>
            <person name="Bult C."/>
            <person name="Grimmond S.M."/>
            <person name="Teasdale R.D."/>
            <person name="Liu E.T."/>
            <person name="Brusic V."/>
            <person name="Quackenbush J."/>
            <person name="Wahlestedt C."/>
            <person name="Mattick J.S."/>
            <person name="Hume D.A."/>
            <person name="Kai C."/>
            <person name="Sasaki D."/>
            <person name="Tomaru Y."/>
            <person name="Fukuda S."/>
            <person name="Kanamori-Katayama M."/>
            <person name="Suzuki M."/>
            <person name="Aoki J."/>
            <person name="Arakawa T."/>
            <person name="Iida J."/>
            <person name="Imamura K."/>
            <person name="Itoh M."/>
            <person name="Kato T."/>
            <person name="Kawaji H."/>
            <person name="Kawagashira N."/>
            <person name="Kawashima T."/>
            <person name="Kojima M."/>
            <person name="Kondo S."/>
            <person name="Konno H."/>
            <person name="Nakano K."/>
            <person name="Ninomiya N."/>
            <person name="Nishio T."/>
            <person name="Okada M."/>
            <person name="Plessy C."/>
            <person name="Shibata K."/>
            <person name="Shiraki T."/>
            <person name="Suzuki S."/>
            <person name="Tagami M."/>
            <person name="Waki K."/>
            <person name="Watahiki A."/>
            <person name="Okamura-Oho Y."/>
            <person name="Suzuki H."/>
            <person name="Kawai J."/>
            <person name="Hayashizaki Y."/>
        </authorList>
    </citation>
    <scope>NUCLEOTIDE SEQUENCE [LARGE SCALE MRNA] (ISOFORMS 1 AND 2)</scope>
    <source>
        <strain>C57BL/6J</strain>
        <strain>NOD</strain>
        <tissue>Embryo</tissue>
        <tissue>Inner ear</tissue>
        <tissue>Ovary</tissue>
        <tissue>Spleen</tissue>
    </source>
</reference>
<reference key="2">
    <citation type="journal article" date="2009" name="PLoS Biol.">
        <title>Lineage-specific biology revealed by a finished genome assembly of the mouse.</title>
        <authorList>
            <person name="Church D.M."/>
            <person name="Goodstadt L."/>
            <person name="Hillier L.W."/>
            <person name="Zody M.C."/>
            <person name="Goldstein S."/>
            <person name="She X."/>
            <person name="Bult C.J."/>
            <person name="Agarwala R."/>
            <person name="Cherry J.L."/>
            <person name="DiCuccio M."/>
            <person name="Hlavina W."/>
            <person name="Kapustin Y."/>
            <person name="Meric P."/>
            <person name="Maglott D."/>
            <person name="Birtle Z."/>
            <person name="Marques A.C."/>
            <person name="Graves T."/>
            <person name="Zhou S."/>
            <person name="Teague B."/>
            <person name="Potamousis K."/>
            <person name="Churas C."/>
            <person name="Place M."/>
            <person name="Herschleb J."/>
            <person name="Runnheim R."/>
            <person name="Forrest D."/>
            <person name="Amos-Landgraf J."/>
            <person name="Schwartz D.C."/>
            <person name="Cheng Z."/>
            <person name="Lindblad-Toh K."/>
            <person name="Eichler E.E."/>
            <person name="Ponting C.P."/>
        </authorList>
    </citation>
    <scope>NUCLEOTIDE SEQUENCE [LARGE SCALE GENOMIC DNA]</scope>
    <source>
        <strain>C57BL/6J</strain>
    </source>
</reference>
<reference key="3">
    <citation type="journal article" date="2004" name="Genome Res.">
        <title>The status, quality, and expansion of the NIH full-length cDNA project: the Mammalian Gene Collection (MGC).</title>
        <authorList>
            <consortium name="The MGC Project Team"/>
        </authorList>
    </citation>
    <scope>NUCLEOTIDE SEQUENCE [LARGE SCALE MRNA] (ISOFORM 1)</scope>
</reference>
<reference key="4">
    <citation type="journal article" date="2005" name="Invest. Ophthalmol. Vis. Sci.">
        <title>Expression and function of glutamine transporters SN1 (SNAT3) and SN2 (SNAT5) in retinal Mueller cells.</title>
        <authorList>
            <person name="Umapathy N.S."/>
            <person name="Li W."/>
            <person name="Mysona B.A."/>
            <person name="Smith S.B."/>
            <person name="Ganapathy V."/>
        </authorList>
    </citation>
    <scope>FUNCTION</scope>
    <scope>TRANSPORTER ACTIVITY</scope>
</reference>
<reference key="5">
    <citation type="journal article" date="2006" name="J. Mol. Endocrinol.">
        <title>The effect of neurogenin3 deficiency on pancreatic gene expression in embryonic mice.</title>
        <authorList>
            <person name="Petri A."/>
            <person name="Ahnfelt-Roenne J."/>
            <person name="Frederiksen K.S."/>
            <person name="Edwards D.G."/>
            <person name="Madsen D."/>
            <person name="Serup P."/>
            <person name="Fleckner J."/>
            <person name="Heller R.S."/>
        </authorList>
    </citation>
    <scope>INDUCTION</scope>
</reference>
<reference key="6">
    <citation type="journal article" date="2008" name="Invest. Ophthalmol. Vis. Sci.">
        <title>Expression and function of system N glutamine transporters (SN1/SN2 or SNAT3/SNAT5) in retinal ganglion cells.</title>
        <authorList>
            <person name="Umapathy N.S."/>
            <person name="Dun Y."/>
            <person name="Martin P.M."/>
            <person name="Duplantier J.N."/>
            <person name="Roon P."/>
            <person name="Prasad P."/>
            <person name="Smith S.B."/>
            <person name="Ganapathy V."/>
        </authorList>
    </citation>
    <scope>FUNCTION</scope>
    <scope>TRANSPORTER ACTIVITY</scope>
    <scope>TISSUE SPECIFICITY</scope>
    <scope>SUBCELLULAR LOCATION</scope>
</reference>
<reference key="7">
    <citation type="journal article" date="2010" name="Cell">
        <title>A tissue-specific atlas of mouse protein phosphorylation and expression.</title>
        <authorList>
            <person name="Huttlin E.L."/>
            <person name="Jedrychowski M.P."/>
            <person name="Elias J.E."/>
            <person name="Goswami T."/>
            <person name="Rad R."/>
            <person name="Beausoleil S.A."/>
            <person name="Villen J."/>
            <person name="Haas W."/>
            <person name="Sowa M.E."/>
            <person name="Gygi S.P."/>
        </authorList>
    </citation>
    <scope>IDENTIFICATION BY MASS SPECTROMETRY [LARGE SCALE ANALYSIS]</scope>
    <source>
        <tissue>Pancreas</tissue>
    </source>
</reference>
<accession>Q3U1J0</accession>
<accession>Q3TZ39</accession>
<accession>Q8BJZ6</accession>
<accession>Q8BW30</accession>
<dbReference type="EMBL" id="AK054485">
    <property type="protein sequence ID" value="BAC35799.1"/>
    <property type="status" value="ALT_INIT"/>
    <property type="molecule type" value="mRNA"/>
</dbReference>
<dbReference type="EMBL" id="AK077667">
    <property type="protein sequence ID" value="BAC36941.1"/>
    <property type="molecule type" value="mRNA"/>
</dbReference>
<dbReference type="EMBL" id="AK155928">
    <property type="protein sequence ID" value="BAE33507.1"/>
    <property type="molecule type" value="mRNA"/>
</dbReference>
<dbReference type="EMBL" id="AK158125">
    <property type="protein sequence ID" value="BAE34371.1"/>
    <property type="molecule type" value="mRNA"/>
</dbReference>
<dbReference type="EMBL" id="AL805902">
    <property type="status" value="NOT_ANNOTATED_CDS"/>
    <property type="molecule type" value="Genomic_DNA"/>
</dbReference>
<dbReference type="EMBL" id="BC152401">
    <property type="protein sequence ID" value="AAI52402.1"/>
    <property type="molecule type" value="mRNA"/>
</dbReference>
<dbReference type="CCDS" id="CCDS52990.1">
    <molecule id="Q3U1J0-1"/>
</dbReference>
<dbReference type="RefSeq" id="NP_766067.2">
    <molecule id="Q3U1J0-1"/>
    <property type="nucleotide sequence ID" value="NM_172479.3"/>
</dbReference>
<dbReference type="SMR" id="Q3U1J0"/>
<dbReference type="FunCoup" id="Q3U1J0">
    <property type="interactions" value="87"/>
</dbReference>
<dbReference type="STRING" id="10090.ENSMUSP00000033512"/>
<dbReference type="GlyCosmos" id="Q3U1J0">
    <property type="glycosylation" value="1 site, No reported glycans"/>
</dbReference>
<dbReference type="GlyGen" id="Q3U1J0">
    <property type="glycosylation" value="1 site"/>
</dbReference>
<dbReference type="iPTMnet" id="Q3U1J0"/>
<dbReference type="PhosphoSitePlus" id="Q3U1J0"/>
<dbReference type="jPOST" id="Q3U1J0"/>
<dbReference type="PaxDb" id="10090-ENSMUSP00000033512"/>
<dbReference type="ProteomicsDB" id="260778">
    <molecule id="Q3U1J0-1"/>
</dbReference>
<dbReference type="ProteomicsDB" id="260779">
    <molecule id="Q3U1J0-2"/>
</dbReference>
<dbReference type="Antibodypedia" id="43079">
    <property type="antibodies" value="93 antibodies from 16 providers"/>
</dbReference>
<dbReference type="DNASU" id="209837"/>
<dbReference type="Ensembl" id="ENSMUST00000033512.11">
    <molecule id="Q3U1J0-1"/>
    <property type="protein sequence ID" value="ENSMUSP00000033512.5"/>
    <property type="gene ID" value="ENSMUSG00000031170.15"/>
</dbReference>
<dbReference type="Ensembl" id="ENSMUST00000115590.2">
    <molecule id="Q3U1J0-2"/>
    <property type="protein sequence ID" value="ENSMUSP00000111253.2"/>
    <property type="gene ID" value="ENSMUSG00000031170.15"/>
</dbReference>
<dbReference type="Ensembl" id="ENSMUST00000115591.8">
    <molecule id="Q3U1J0-2"/>
    <property type="protein sequence ID" value="ENSMUSP00000111254.2"/>
    <property type="gene ID" value="ENSMUSG00000031170.15"/>
</dbReference>
<dbReference type="GeneID" id="209837"/>
<dbReference type="KEGG" id="mmu:209837"/>
<dbReference type="UCSC" id="uc009sos.2">
    <molecule id="Q3U1J0-1"/>
    <property type="organism name" value="mouse"/>
</dbReference>
<dbReference type="AGR" id="MGI:2148066"/>
<dbReference type="CTD" id="92745"/>
<dbReference type="MGI" id="MGI:2148066">
    <property type="gene designation" value="Slc38a5"/>
</dbReference>
<dbReference type="VEuPathDB" id="HostDB:ENSMUSG00000031170"/>
<dbReference type="eggNOG" id="KOG1305">
    <property type="taxonomic scope" value="Eukaryota"/>
</dbReference>
<dbReference type="GeneTree" id="ENSGT00940000161233"/>
<dbReference type="HOGENOM" id="CLU_009020_0_2_1"/>
<dbReference type="InParanoid" id="Q3U1J0"/>
<dbReference type="OMA" id="FGCARFG"/>
<dbReference type="OrthoDB" id="655540at2759"/>
<dbReference type="PhylomeDB" id="Q3U1J0"/>
<dbReference type="TreeFam" id="TF328787"/>
<dbReference type="Reactome" id="R-MMU-352230">
    <property type="pathway name" value="Amino acid transport across the plasma membrane"/>
</dbReference>
<dbReference type="BioGRID-ORCS" id="209837">
    <property type="hits" value="3 hits in 80 CRISPR screens"/>
</dbReference>
<dbReference type="ChiTaRS" id="Slc38a5">
    <property type="organism name" value="mouse"/>
</dbReference>
<dbReference type="PRO" id="PR:Q3U1J0"/>
<dbReference type="Proteomes" id="UP000000589">
    <property type="component" value="Chromosome X"/>
</dbReference>
<dbReference type="RNAct" id="Q3U1J0">
    <property type="molecule type" value="protein"/>
</dbReference>
<dbReference type="Bgee" id="ENSMUSG00000031170">
    <property type="expression patterns" value="Expressed in fetal liver hematopoietic progenitor cell and 112 other cell types or tissues"/>
</dbReference>
<dbReference type="ExpressionAtlas" id="Q3U1J0">
    <property type="expression patterns" value="baseline and differential"/>
</dbReference>
<dbReference type="GO" id="GO:0005886">
    <property type="term" value="C:plasma membrane"/>
    <property type="evidence" value="ECO:0000250"/>
    <property type="project" value="UniProtKB"/>
</dbReference>
<dbReference type="GO" id="GO:0022858">
    <property type="term" value="F:alanine transmembrane transporter activity"/>
    <property type="evidence" value="ECO:0007669"/>
    <property type="project" value="Ensembl"/>
</dbReference>
<dbReference type="GO" id="GO:0015187">
    <property type="term" value="F:glycine transmembrane transporter activity"/>
    <property type="evidence" value="ECO:0007669"/>
    <property type="project" value="Ensembl"/>
</dbReference>
<dbReference type="GO" id="GO:0015182">
    <property type="term" value="F:L-asparagine transmembrane transporter activity"/>
    <property type="evidence" value="ECO:0007669"/>
    <property type="project" value="Ensembl"/>
</dbReference>
<dbReference type="GO" id="GO:0140830">
    <property type="term" value="F:L-glutamine, sodium:proton antiporter activity"/>
    <property type="evidence" value="ECO:0000314"/>
    <property type="project" value="UniProtKB"/>
</dbReference>
<dbReference type="GO" id="GO:0005290">
    <property type="term" value="F:L-histidine transmembrane transporter activity"/>
    <property type="evidence" value="ECO:0007669"/>
    <property type="project" value="Ensembl"/>
</dbReference>
<dbReference type="GO" id="GO:0015194">
    <property type="term" value="F:L-serine transmembrane transporter activity"/>
    <property type="evidence" value="ECO:0007669"/>
    <property type="project" value="Ensembl"/>
</dbReference>
<dbReference type="GO" id="GO:0140893">
    <property type="term" value="F:neutral amino acid, sodium:proton antiporter activity"/>
    <property type="evidence" value="ECO:0000250"/>
    <property type="project" value="UniProtKB"/>
</dbReference>
<dbReference type="GO" id="GO:0032973">
    <property type="term" value="P:amino acid export across plasma membrane"/>
    <property type="evidence" value="ECO:0000250"/>
    <property type="project" value="UniProtKB"/>
</dbReference>
<dbReference type="GO" id="GO:1903713">
    <property type="term" value="P:asparagine transmembrane transport"/>
    <property type="evidence" value="ECO:0007669"/>
    <property type="project" value="Ensembl"/>
</dbReference>
<dbReference type="GO" id="GO:1904557">
    <property type="term" value="P:L-alanine transmembrane transport"/>
    <property type="evidence" value="ECO:0007669"/>
    <property type="project" value="Ensembl"/>
</dbReference>
<dbReference type="GO" id="GO:1903803">
    <property type="term" value="P:L-glutamine import across plasma membrane"/>
    <property type="evidence" value="ECO:0000314"/>
    <property type="project" value="UniProtKB"/>
</dbReference>
<dbReference type="GO" id="GO:1903812">
    <property type="term" value="P:L-serine import across plasma membrane"/>
    <property type="evidence" value="ECO:0000250"/>
    <property type="project" value="UniProtKB"/>
</dbReference>
<dbReference type="GO" id="GO:0015804">
    <property type="term" value="P:neutral amino acid transport"/>
    <property type="evidence" value="ECO:0000250"/>
    <property type="project" value="UniProtKB"/>
</dbReference>
<dbReference type="InterPro" id="IPR013057">
    <property type="entry name" value="AA_transpt_TM"/>
</dbReference>
<dbReference type="PANTHER" id="PTHR22950">
    <property type="entry name" value="AMINO ACID TRANSPORTER"/>
    <property type="match status" value="1"/>
</dbReference>
<dbReference type="PANTHER" id="PTHR22950:SF74">
    <property type="entry name" value="SODIUM-COUPLED NEUTRAL AMINO ACID TRANSPORTER 5"/>
    <property type="match status" value="1"/>
</dbReference>
<dbReference type="Pfam" id="PF01490">
    <property type="entry name" value="Aa_trans"/>
    <property type="match status" value="1"/>
</dbReference>
<comment type="function">
    <text evidence="1 5 6">Symporter that cotransports neutral amino acids and sodium ions, coupled to an H(+) antiporter activity (PubMed:15489334, PubMed:16249471). Releases L-glutamine and glycine from astroglial cells and may participate in the glutamate/GABA-L-glutamine cycle and the NMDA receptors activation (By similarity). In addition, contributes significantly to L-glutamine uptake in retina, namely in ganglion and Mueller cells therefore, participates in the retinal glutamate-glutamine cycle (PubMed:15489334, PubMed:16249471). The transport activity is pH sensitive, Li(+) tolerant, bidirectional and associated with large uncoupled fluxes of protons (By similarity). Moreover functions in both direction and is associated with large uncoupled fluxes of protons (By similarity). The transport is electroneutral coupled to the cotransport of 1 Na(+) and the antiport of 1 H(+) (By similarity). May have a particular importance for modulation of net hepatic glutamine flux (By similarity).</text>
</comment>
<comment type="catalytic activity">
    <reaction evidence="11 12">
        <text>L-glutamine(out) + Na(+)(out) + H(+)(in) = L-glutamine(in) + Na(+)(in) + H(+)(out)</text>
        <dbReference type="Rhea" id="RHEA:71127"/>
        <dbReference type="ChEBI" id="CHEBI:15378"/>
        <dbReference type="ChEBI" id="CHEBI:29101"/>
        <dbReference type="ChEBI" id="CHEBI:58359"/>
    </reaction>
    <physiologicalReaction direction="left-to-right" evidence="11 12">
        <dbReference type="Rhea" id="RHEA:71128"/>
    </physiologicalReaction>
    <physiologicalReaction direction="right-to-left" evidence="1">
        <dbReference type="Rhea" id="RHEA:71129"/>
    </physiologicalReaction>
</comment>
<comment type="catalytic activity">
    <reaction evidence="1">
        <text>L-serine(out) + Na(+)(out) + H(+)(in) = L-serine(in) + Na(+)(in) + H(+)(out)</text>
        <dbReference type="Rhea" id="RHEA:71159"/>
        <dbReference type="ChEBI" id="CHEBI:15378"/>
        <dbReference type="ChEBI" id="CHEBI:29101"/>
        <dbReference type="ChEBI" id="CHEBI:33384"/>
    </reaction>
    <physiologicalReaction direction="left-to-right" evidence="1">
        <dbReference type="Rhea" id="RHEA:71160"/>
    </physiologicalReaction>
    <physiologicalReaction direction="right-to-left" evidence="1">
        <dbReference type="Rhea" id="RHEA:71161"/>
    </physiologicalReaction>
</comment>
<comment type="catalytic activity">
    <reaction evidence="1">
        <text>L-alanine(out) + Na(+)(out) + H(+)(in) = L-alanine(in) + Na(+)(in) + H(+)(out)</text>
        <dbReference type="Rhea" id="RHEA:71163"/>
        <dbReference type="ChEBI" id="CHEBI:15378"/>
        <dbReference type="ChEBI" id="CHEBI:29101"/>
        <dbReference type="ChEBI" id="CHEBI:57972"/>
    </reaction>
    <physiologicalReaction direction="left-to-right" evidence="1">
        <dbReference type="Rhea" id="RHEA:71164"/>
    </physiologicalReaction>
    <physiologicalReaction direction="right-to-left" evidence="1">
        <dbReference type="Rhea" id="RHEA:71165"/>
    </physiologicalReaction>
</comment>
<comment type="catalytic activity">
    <reaction evidence="1">
        <text>glycine(out) + Na(+)(out) + H(+)(in) = glycine(in) + Na(+)(in) + H(+)(out)</text>
        <dbReference type="Rhea" id="RHEA:71167"/>
        <dbReference type="ChEBI" id="CHEBI:15378"/>
        <dbReference type="ChEBI" id="CHEBI:29101"/>
        <dbReference type="ChEBI" id="CHEBI:57305"/>
    </reaction>
    <physiologicalReaction direction="left-to-right" evidence="1">
        <dbReference type="Rhea" id="RHEA:71168"/>
    </physiologicalReaction>
    <physiologicalReaction direction="right-to-left" evidence="1">
        <dbReference type="Rhea" id="RHEA:71169"/>
    </physiologicalReaction>
</comment>
<comment type="catalytic activity">
    <reaction evidence="1">
        <text>L-asparagine(out) + Na(+)(out) + H(+)(in) = L-asparagine(in) + Na(+)(in) + H(+)(out)</text>
        <dbReference type="Rhea" id="RHEA:71131"/>
        <dbReference type="ChEBI" id="CHEBI:15378"/>
        <dbReference type="ChEBI" id="CHEBI:29101"/>
        <dbReference type="ChEBI" id="CHEBI:58048"/>
    </reaction>
    <physiologicalReaction direction="left-to-right" evidence="1">
        <dbReference type="Rhea" id="RHEA:71132"/>
    </physiologicalReaction>
    <physiologicalReaction direction="right-to-left" evidence="1">
        <dbReference type="Rhea" id="RHEA:71133"/>
    </physiologicalReaction>
</comment>
<comment type="catalytic activity">
    <reaction evidence="1">
        <text>L-histidine(out) + Na(+)(out) + H(+)(in) = L-histidine(in) + Na(+)(in) + H(+)(out)</text>
        <dbReference type="Rhea" id="RHEA:71135"/>
        <dbReference type="ChEBI" id="CHEBI:15378"/>
        <dbReference type="ChEBI" id="CHEBI:29101"/>
        <dbReference type="ChEBI" id="CHEBI:57595"/>
    </reaction>
    <physiologicalReaction direction="left-to-right" evidence="1">
        <dbReference type="Rhea" id="RHEA:71136"/>
    </physiologicalReaction>
    <physiologicalReaction direction="right-to-left" evidence="1">
        <dbReference type="Rhea" id="RHEA:71137"/>
    </physiologicalReaction>
</comment>
<comment type="catalytic activity">
    <reaction evidence="1">
        <text>L-cysteine(out) + Na(+)(out) + H(+)(in) = L-cysteine(in) + Na(+)(in) + H(+)(out)</text>
        <dbReference type="Rhea" id="RHEA:71171"/>
        <dbReference type="ChEBI" id="CHEBI:15378"/>
        <dbReference type="ChEBI" id="CHEBI:29101"/>
        <dbReference type="ChEBI" id="CHEBI:35235"/>
    </reaction>
    <physiologicalReaction direction="left-to-right" evidence="1">
        <dbReference type="Rhea" id="RHEA:71172"/>
    </physiologicalReaction>
    <physiologicalReaction direction="right-to-left" evidence="1">
        <dbReference type="Rhea" id="RHEA:71173"/>
    </physiologicalReaction>
</comment>
<comment type="activity regulation">
    <text evidence="1 2">Not inhibited by lithium (By similarity). Partial allosteric regulation on ions sodium binding (By similarity).</text>
</comment>
<comment type="subcellular location">
    <subcellularLocation>
        <location evidence="8">Cell membrane</location>
        <topology evidence="3">Multi-pass membrane protein</topology>
    </subcellularLocation>
    <text evidence="1">Localized at astroglial membrane.</text>
</comment>
<comment type="alternative products">
    <event type="alternative splicing"/>
    <isoform>
        <id>Q3U1J0-1</id>
        <name>1</name>
        <sequence type="displayed"/>
    </isoform>
    <isoform>
        <id>Q3U1J0-2</id>
        <name>2</name>
        <sequence type="described" ref="VSP_029703"/>
    </isoform>
</comment>
<comment type="tissue specificity">
    <text evidence="8">Expressed in the ganglion cell layer and the nerve fiber layer (at protein level) (PubMed:18689705). Also expreseed in the cells of the inner nuclear layer and in the inner plexiform layer (at protein level) (PubMed:18689705). Expressed in Mueller and ganglion retinal cell (PubMed:18689705).</text>
</comment>
<comment type="induction">
    <text evidence="7">Down-regulated in Dgn3 deficient mice.</text>
</comment>
<comment type="similarity">
    <text evidence="10">Belongs to the amino acid/polyamine transporter 2 family.</text>
</comment>
<comment type="caution">
    <text evidence="1">Nakanishi et al (PMID:11698233) shows that the transport process is electrogenic, contrary to the conclusions of Hamdani et al (PMID:22821889) who finds that the transport is electroneutral with a Na(+):L-glutamine stoichiometry of 1:1 (By similarity). Hamdani et al. shows that this electrogenic transport describes by Nakanishi et al. would correspond to large uncoupled fluxes of protons (By similarity).</text>
</comment>
<comment type="sequence caution" evidence="10">
    <conflict type="erroneous initiation">
        <sequence resource="EMBL-CDS" id="BAC35799"/>
    </conflict>
    <text>Truncated N-terminus.</text>
</comment>
<sequence length="479" mass="52617">MAISCAVGMEMQEPKMNGTLSAGAAAGYRQEREGFLPTTRNPATGRKPVQFLDFEGKTSFGMSVFNLSNAIMGSGILGLAYAMAHTGVIFFLALLLCIALLSSYSIHLLLTCASVVGIRAYEQLGQRAFGPAGKVVVAIIICLHNVGAMSSYLFIIKSELPLVIGTFLHMDPEGDWFLKGNLLIILVSLLIILPLALMKHLGYLGYTSSLSLTCMLFFLISVIYKKFQIGCDVSHNDTVVEAEQAPLQAFNSSCEAELFTVDSQMSYTVPIMAFAFVCHPEVLPIYTELCRPTQRRMQAVANMSIGAMFIMYGLTATFGYLTFYSTVKAEMLEMYTQEDMLILCVRLAVLLAVTLTVPVVLFPIRRALQQLLFPSKAFSWLRHVAIALILLILVNILVICVPTIRDIFGFIGSTSAPSLIFILPSVFYLRIVPTEVEPLFSWPKIQALCFGVLGVLFMAISLGFMFANWATGQSRMSGH</sequence>
<gene>
    <name evidence="13" type="primary">Slc38a5</name>
    <name type="synonym">Jm24</name>
    <name type="synonym">Sn2</name>
    <name type="synonym">Snat5</name>
</gene>